<dbReference type="EMBL" id="BC061946">
    <property type="protein sequence ID" value="AAH61946.1"/>
    <property type="molecule type" value="mRNA"/>
</dbReference>
<dbReference type="RefSeq" id="NP_001083624.1">
    <property type="nucleotide sequence ID" value="NM_001090155.1"/>
</dbReference>
<dbReference type="SMR" id="Q6P6Z0"/>
<dbReference type="BioGRID" id="100352">
    <property type="interactions" value="5"/>
</dbReference>
<dbReference type="DNASU" id="399026"/>
<dbReference type="GeneID" id="399026"/>
<dbReference type="KEGG" id="xla:399026"/>
<dbReference type="AGR" id="Xenbase:XB-GENE-967911"/>
<dbReference type="CTD" id="399026"/>
<dbReference type="Xenbase" id="XB-GENE-967911">
    <property type="gene designation" value="ddb1.S"/>
</dbReference>
<dbReference type="OMA" id="HQDFLMR"/>
<dbReference type="OrthoDB" id="433457at2759"/>
<dbReference type="UniPathway" id="UPA00143"/>
<dbReference type="Proteomes" id="UP000186698">
    <property type="component" value="Chromosome 4S"/>
</dbReference>
<dbReference type="Bgee" id="399026">
    <property type="expression patterns" value="Expressed in muscle tissue and 19 other cell types or tissues"/>
</dbReference>
<dbReference type="GO" id="GO:0080008">
    <property type="term" value="C:Cul4-RING E3 ubiquitin ligase complex"/>
    <property type="evidence" value="ECO:0000250"/>
    <property type="project" value="UniProtKB"/>
</dbReference>
<dbReference type="GO" id="GO:0031464">
    <property type="term" value="C:Cul4A-RING E3 ubiquitin ligase complex"/>
    <property type="evidence" value="ECO:0000250"/>
    <property type="project" value="UniProtKB"/>
</dbReference>
<dbReference type="GO" id="GO:0031465">
    <property type="term" value="C:Cul4B-RING E3 ubiquitin ligase complex"/>
    <property type="evidence" value="ECO:0000250"/>
    <property type="project" value="UniProtKB"/>
</dbReference>
<dbReference type="GO" id="GO:0005737">
    <property type="term" value="C:cytoplasm"/>
    <property type="evidence" value="ECO:0000250"/>
    <property type="project" value="UniProtKB"/>
</dbReference>
<dbReference type="GO" id="GO:0005634">
    <property type="term" value="C:nucleus"/>
    <property type="evidence" value="ECO:0000250"/>
    <property type="project" value="UniProtKB"/>
</dbReference>
<dbReference type="GO" id="GO:0035861">
    <property type="term" value="C:site of double-strand break"/>
    <property type="evidence" value="ECO:0000318"/>
    <property type="project" value="GO_Central"/>
</dbReference>
<dbReference type="GO" id="GO:0003677">
    <property type="term" value="F:DNA binding"/>
    <property type="evidence" value="ECO:0007669"/>
    <property type="project" value="UniProtKB-KW"/>
</dbReference>
<dbReference type="GO" id="GO:0006281">
    <property type="term" value="P:DNA repair"/>
    <property type="evidence" value="ECO:0000318"/>
    <property type="project" value="GO_Central"/>
</dbReference>
<dbReference type="GO" id="GO:0043161">
    <property type="term" value="P:proteasome-mediated ubiquitin-dependent protein catabolic process"/>
    <property type="evidence" value="ECO:0000250"/>
    <property type="project" value="UniProtKB"/>
</dbReference>
<dbReference type="GO" id="GO:0016567">
    <property type="term" value="P:protein ubiquitination"/>
    <property type="evidence" value="ECO:0000250"/>
    <property type="project" value="UniProtKB"/>
</dbReference>
<dbReference type="GO" id="GO:0042752">
    <property type="term" value="P:regulation of circadian rhythm"/>
    <property type="evidence" value="ECO:0000250"/>
    <property type="project" value="UniProtKB"/>
</dbReference>
<dbReference type="GO" id="GO:0048511">
    <property type="term" value="P:rhythmic process"/>
    <property type="evidence" value="ECO:0007669"/>
    <property type="project" value="UniProtKB-KW"/>
</dbReference>
<dbReference type="FunFam" id="1.10.150.910:FF:000001">
    <property type="entry name" value="DNA damage-binding protein 1"/>
    <property type="match status" value="1"/>
</dbReference>
<dbReference type="FunFam" id="2.130.10.10:FF:000073">
    <property type="entry name" value="DNA damage-binding protein 1"/>
    <property type="match status" value="1"/>
</dbReference>
<dbReference type="FunFam" id="2.130.10.10:FF:002576">
    <property type="entry name" value="DNA damage-binding protein 1"/>
    <property type="match status" value="1"/>
</dbReference>
<dbReference type="FunFam" id="2.130.10.10:FF:002484">
    <property type="entry name" value="DNA damage-binding protein 1 isoform X3"/>
    <property type="match status" value="1"/>
</dbReference>
<dbReference type="Gene3D" id="1.10.150.910">
    <property type="match status" value="1"/>
</dbReference>
<dbReference type="Gene3D" id="2.130.10.10">
    <property type="entry name" value="YVTN repeat-like/Quinoprotein amine dehydrogenase"/>
    <property type="match status" value="3"/>
</dbReference>
<dbReference type="InterPro" id="IPR018846">
    <property type="entry name" value="Beta-prop_RSE1/DDB1/CPSF1_1st"/>
</dbReference>
<dbReference type="InterPro" id="IPR004871">
    <property type="entry name" value="Cleavage/polyA-sp_fac_asu_C"/>
</dbReference>
<dbReference type="InterPro" id="IPR050358">
    <property type="entry name" value="RSE1/DDB1/CFT1/CPSF1"/>
</dbReference>
<dbReference type="InterPro" id="IPR015943">
    <property type="entry name" value="WD40/YVTN_repeat-like_dom_sf"/>
</dbReference>
<dbReference type="InterPro" id="IPR036322">
    <property type="entry name" value="WD40_repeat_dom_sf"/>
</dbReference>
<dbReference type="PANTHER" id="PTHR10644">
    <property type="entry name" value="DNA REPAIR/RNA PROCESSING CPSF FAMILY"/>
    <property type="match status" value="1"/>
</dbReference>
<dbReference type="Pfam" id="PF10433">
    <property type="entry name" value="Beta-prop_RSE1_1st"/>
    <property type="match status" value="1"/>
</dbReference>
<dbReference type="Pfam" id="PF23726">
    <property type="entry name" value="Beta-prop_RSE1_2nd"/>
    <property type="match status" value="1"/>
</dbReference>
<dbReference type="Pfam" id="PF03178">
    <property type="entry name" value="CPSF_A"/>
    <property type="match status" value="1"/>
</dbReference>
<dbReference type="SUPFAM" id="SSF50978">
    <property type="entry name" value="WD40 repeat-like"/>
    <property type="match status" value="1"/>
</dbReference>
<name>DDB1_XENLA</name>
<proteinExistence type="evidence at transcript level"/>
<reference key="1">
    <citation type="submission" date="2003-11" db="EMBL/GenBank/DDBJ databases">
        <authorList>
            <consortium name="NIH - Xenopus Gene Collection (XGC) project"/>
        </authorList>
    </citation>
    <scope>NUCLEOTIDE SEQUENCE [LARGE SCALE MRNA]</scope>
    <source>
        <tissue>Embryo</tissue>
    </source>
</reference>
<gene>
    <name type="primary">ddb1</name>
</gene>
<protein>
    <recommendedName>
        <fullName>DNA damage-binding protein 1</fullName>
    </recommendedName>
    <alternativeName>
        <fullName>Damage-specific DNA-binding protein 1</fullName>
    </alternativeName>
</protein>
<sequence length="1140" mass="126833">MSYNYVVTAQKPTAVNACVTGHFTSEDDLNLLIAKNTRLEIYVVTPEGLRPVKEVGMYGKIAVMELFRPKGESKDLLFILTAKYNACILEYKQSGDSIDIITRAHGNVQDRIGRPSETGIIGIIDPDCRMIGLRLYDGLFKVIPLERDNKELKAFNIRLEELHVIDVKFLYSCQAPTICFVYQDPQGRHVKTYEVSLREKEFSKGPWKQENVEAEASMVIAVPEPFGGAIIIGQESITYHNGDKYLAIAPPIIKQSTIVCHNRVDVNGSRYLLGDMEGRLFMLLLEKEEQMDGSVTLKDLRVELLGETSIAECLTYLDNGVVFVGSRLGDSQLVKLTTESNEQGSYVVVMETFTNLGPIVDMCVVDLERQGQGQLVTCSGAFKEGSLRIIRNGIGIHEHASIDLPGIKGLWPLRVAADRDTDDTLVLSFVGQTRVLTLTGEEVEETDLAGFVDDQQTFFCGNVAHQQLIQITSASVRLVSQNPQNLVSEWKEPQGRKVSVCSCNSRQVLLAVGRVLYYLEIHPGELRQTSCTEMEHEVACLDVTPLGGNDTLSSLCAIGLWTDISARILSLPGFQLLHKEMLGGEIIPRSILMTSFESSHYLLCALGDGALFYFSLNTDTGLLSDRKKVTLGTQPTVLRTFRSLSTTNVFACSDRPTVIYSSNHKLVFSNVNLKEVNYMCPLNSEGYPDSLALANNSTLTIGTIDEIQKLHIRTVPLFESPRKICYQEVSQCFGVLSSRIEVQDASGGSSPLRPSASTQALSSSVSCSKLFSGSTSPHETSFGEEVEVHNLLIIDQHTFEVLHTHQFLQNEYTLSLVSCKLGKDPTTYFVVGTAMVYPDEAEPKQGRIVVFQYNDGKLQTVAEKEVKGAVYSMVEFNGKLLASINSTVRLYEWTAEKELRTECNHYNNIMALYLKTKGDFILVGDLMRSVLLLAYKPMEGNFEEIARDFNPNWMSAVEILDDDNFLGAENAFNLFVCQKDSAATTDEERQHLQEVGLFHLGEFVNVFCHGSLVMQNLGETSPPTQGSVLFGTVNGMIGLVTSLSESWYNLLLDVQNRLNKVIKSVGKIEHSFWRSFHTERKTEPATGFIDGDLIESFLDISRPKMQEVIANLQIDDGSGMKRETTVDDLIKVVEELTRIH</sequence>
<evidence type="ECO:0000250" key="1"/>
<evidence type="ECO:0000250" key="2">
    <source>
        <dbReference type="UniProtKB" id="Q16531"/>
    </source>
</evidence>
<evidence type="ECO:0000250" key="3">
    <source>
        <dbReference type="UniProtKB" id="Q805F9"/>
    </source>
</evidence>
<evidence type="ECO:0000305" key="4"/>
<comment type="function">
    <text evidence="2 3">Protein, which is both involved in DNA repair and protein ubiquitination, as part of the UV-DDB complex and DCX (DDB1-CUL4-X-box) complexes, respectively. Core component of the UV-DDB complex (UV-damaged DNA-binding protein complex), a complex that recognizes UV-induced DNA damage and recruit proteins of the nucleotide excision repair pathway (the NER pathway) to initiate DNA repair. The UV-DDB complex may recognize UV-induced DNA damage and recruit proteins of the nucleotide excision repair pathway (the NER pathway) to initiate DNA repair (By similarity). Also functions as a component of numerous distinct DCX (DDB1-CUL4-X-box) E3 ubiquitin-protein ligase complexes which mediate the ubiquitination and subsequent proteasomal degradation of target proteins (By similarity). The functional specificity of the DCX E3 ubiquitin-protein ligase complex is determined by the variable substrate recognition component recruited by DDB1. May play a role in the regulation of the circadian clock (By similarity).</text>
</comment>
<comment type="pathway">
    <text evidence="3">Protein modification; protein ubiquitination.</text>
</comment>
<comment type="subunit">
    <text evidence="2 3">Component of the UV-DDB complex which includes ddb1 and ddb2 (By similarity). Component of numerous DCX (DDB1-CUL4-X-box) E3 ubiquitin-protein ligase complexes which consist of a core of ddb1, cul4a or cul4b and rbx1, and a substrate receptor, such as CRBN (By similarity). DDB1 may recruit specific substrate targeting subunits to the DCX complex. These substrate targeting subunits are generally known as DCAF (DDB1- and CUL4-associated factor) or CDW (CUL4-DDB1-associated WD40-repeat) proteins (By similarity).</text>
</comment>
<comment type="subcellular location">
    <subcellularLocation>
        <location evidence="3">Cytoplasm</location>
    </subcellularLocation>
    <subcellularLocation>
        <location evidence="3">Nucleus</location>
    </subcellularLocation>
</comment>
<comment type="domain">
    <text evidence="1">The core of the protein consists of three WD40 beta-propeller domains.</text>
</comment>
<comment type="similarity">
    <text evidence="4">Belongs to the DDB1 family.</text>
</comment>
<feature type="chain" id="PRO_0000351085" description="DNA damage-binding protein 1">
    <location>
        <begin position="1"/>
        <end position="1140"/>
    </location>
</feature>
<feature type="region of interest" description="WD repeat beta-propeller A" evidence="1">
    <location>
        <begin position="13"/>
        <end position="356"/>
    </location>
</feature>
<feature type="region of interest" description="WD repeat beta-propeller B; Interaction with CUL4A" evidence="1">
    <location>
        <begin position="391"/>
        <end position="708"/>
    </location>
</feature>
<feature type="region of interest" description="WD repeat beta-propeller C" evidence="1">
    <location>
        <begin position="709"/>
        <end position="1043"/>
    </location>
</feature>
<organism>
    <name type="scientific">Xenopus laevis</name>
    <name type="common">African clawed frog</name>
    <dbReference type="NCBI Taxonomy" id="8355"/>
    <lineage>
        <taxon>Eukaryota</taxon>
        <taxon>Metazoa</taxon>
        <taxon>Chordata</taxon>
        <taxon>Craniata</taxon>
        <taxon>Vertebrata</taxon>
        <taxon>Euteleostomi</taxon>
        <taxon>Amphibia</taxon>
        <taxon>Batrachia</taxon>
        <taxon>Anura</taxon>
        <taxon>Pipoidea</taxon>
        <taxon>Pipidae</taxon>
        <taxon>Xenopodinae</taxon>
        <taxon>Xenopus</taxon>
        <taxon>Xenopus</taxon>
    </lineage>
</organism>
<accession>Q6P6Z0</accession>
<keyword id="KW-0090">Biological rhythms</keyword>
<keyword id="KW-0963">Cytoplasm</keyword>
<keyword id="KW-0227">DNA damage</keyword>
<keyword id="KW-0234">DNA repair</keyword>
<keyword id="KW-0238">DNA-binding</keyword>
<keyword id="KW-0539">Nucleus</keyword>
<keyword id="KW-1185">Reference proteome</keyword>
<keyword id="KW-0677">Repeat</keyword>
<keyword id="KW-0833">Ubl conjugation pathway</keyword>